<evidence type="ECO:0000255" key="1">
    <source>
        <dbReference type="HAMAP-Rule" id="MF_04003"/>
    </source>
</evidence>
<proteinExistence type="inferred from homology"/>
<organismHost>
    <name type="scientific">Homo sapiens</name>
    <name type="common">Human</name>
    <dbReference type="NCBI Taxonomy" id="9606"/>
</organismHost>
<comment type="function">
    <text evidence="1">Minor protein of the capsid that localizes along the inner surface of the virion, within the central cavities beneath the L1 pentamers. Plays a role in capsid stabilization through interaction with the major capsid protein L1. Once the virion enters the host cell, L2 escorts the genomic DNA into the nucleus by promoting escape from the endosomal compartments and traffic through the host Golgi network. Mechanistically, the C-terminus of L2 possesses a cell-penetrating peptide that protudes from the host endosome, interacts with host cytoplasmic retromer cargo and thereby mediates the capsid delivery to the host trans-Golgi network. Plays a role through its interaction with host dynein in the intracellular microtubule-dependent transport of viral capsid toward the nucleus. Mediates the viral genome import into the nucleus through binding to host importins. Once within the nucleus, L2 localizes viral genomes to host PML bodies in order to activate early gene expression for establishment of infection. Later on, promotes late gene expression by interacting with the viral E2 protein and by inhibiting its transcriptional activation functions. During virion assembly, encapsidates the genome by direct interaction with the viral DNA.</text>
</comment>
<comment type="subunit">
    <text evidence="1">Interacts with major capsid protein L1. Interacts with E2; this interaction inhibits E2 transcriptional activity but not the DNA replication function E2. Interacts with host GADD45GIP1. Interacts with host HSPA8; this interaction is required for L2 nuclear translocation. Interacts with host importins KPNB2 and KPNB3. Forms a complex with importin alpha2-beta1 heterodimers via interaction with the importin alpha2 adapter. Interacts with host DYNLT1; this interaction is essential for virus intracellular transport during entry. Interacts (via C-terminus) with host retromer subunits VPS35 and VPS29.</text>
</comment>
<comment type="subcellular location">
    <subcellularLocation>
        <location evidence="1">Virion</location>
    </subcellularLocation>
    <subcellularLocation>
        <location evidence="1">Host nucleus</location>
    </subcellularLocation>
    <subcellularLocation>
        <location evidence="1">Host early endosome</location>
    </subcellularLocation>
    <subcellularLocation>
        <location evidence="1">Host Golgi apparatus</location>
    </subcellularLocation>
</comment>
<comment type="PTM">
    <text evidence="1">Highly phosphorylated.</text>
</comment>
<comment type="similarity">
    <text evidence="1">Belongs to the papillomaviridae L2 protein family.</text>
</comment>
<keyword id="KW-0167">Capsid protein</keyword>
<keyword id="KW-1176">Cytoplasmic inwards viral transport</keyword>
<keyword id="KW-1015">Disulfide bond</keyword>
<keyword id="KW-0238">DNA-binding</keyword>
<keyword id="KW-1039">Host endosome</keyword>
<keyword id="KW-1040">Host Golgi apparatus</keyword>
<keyword id="KW-1048">Host nucleus</keyword>
<keyword id="KW-0945">Host-virus interaction</keyword>
<keyword id="KW-0426">Late protein</keyword>
<keyword id="KW-1177">Microtubular inwards viral transport</keyword>
<keyword id="KW-0597">Phosphoprotein</keyword>
<keyword id="KW-1185">Reference proteome</keyword>
<keyword id="KW-1163">Viral penetration into host nucleus</keyword>
<keyword id="KW-0946">Virion</keyword>
<keyword id="KW-1160">Virus entry into host cell</keyword>
<sequence length="533" mass="58263">MARARRVKRASVTDIYRGCKQAGTCPPDVLNKVEQTTIADKILKYGSAAVFFGGLGIGTGRGSGGATGYVPLGEGPGVRVGGTPTIVRPGVTPELIGPADVIPIDTVTPIDPAAPSIVTITDSSAVDLLPELETIAEIHPVPTDNVDIDTPVVTGGRDSSAILEVADPSPPVRTRVSRTQYHNPSFQIITESTPLSGESALADHVIVFEGSGGQNIGGSRSAALDAAQESFEMQTWPSRYSFEIQEGTPPRSSTPVQRAVQSLSSLRRALYNRRLTEQVAVTDPLFLGRPSRLVQFQFDNPTFEEEVTQTFERDVEAFEEPPDRQFLDVVRLGRPTYSETPQGYVRVSRLGRRATIRTRSGAQVGAQVHFYRDLSTIDSEALEMQLLGEHSGDSTIVQAPMESSFIDINIDEPDSLHVGLQDSTEADDIDYNSADLLLEDNIEDFSGSHLVFGNTRRSTTTYTVPRFESPRNTGFYIQDVHGYNVAYPESRDTTEIILPQSDTPTVVINFEEAGGDYYLHPSLKTRKRKRKYL</sequence>
<feature type="chain" id="PRO_0000133582" description="Minor capsid protein L2">
    <location>
        <begin position="1"/>
        <end position="533"/>
    </location>
</feature>
<feature type="short sequence motif" description="Nuclear localization signal" evidence="1">
    <location>
        <begin position="1"/>
        <end position="10"/>
    </location>
</feature>
<feature type="short sequence motif" description="Nuclear localization signal" evidence="1">
    <location>
        <begin position="525"/>
        <end position="532"/>
    </location>
</feature>
<feature type="disulfide bond" evidence="1">
    <location>
        <begin position="19"/>
        <end position="25"/>
    </location>
</feature>
<name>VL2_HPV15</name>
<dbReference type="EMBL" id="X74468">
    <property type="protein sequence ID" value="CAA52510.1"/>
    <property type="molecule type" value="Genomic_DNA"/>
</dbReference>
<dbReference type="PIR" id="S36477">
    <property type="entry name" value="S36477"/>
</dbReference>
<dbReference type="Proteomes" id="UP000008232">
    <property type="component" value="Genome"/>
</dbReference>
<dbReference type="GO" id="GO:0043657">
    <property type="term" value="C:host cell"/>
    <property type="evidence" value="ECO:0007669"/>
    <property type="project" value="GOC"/>
</dbReference>
<dbReference type="GO" id="GO:0044174">
    <property type="term" value="C:host cell endosome"/>
    <property type="evidence" value="ECO:0007669"/>
    <property type="project" value="UniProtKB-KW"/>
</dbReference>
<dbReference type="GO" id="GO:0044177">
    <property type="term" value="C:host cell Golgi apparatus"/>
    <property type="evidence" value="ECO:0007669"/>
    <property type="project" value="UniProtKB-SubCell"/>
</dbReference>
<dbReference type="GO" id="GO:0042025">
    <property type="term" value="C:host cell nucleus"/>
    <property type="evidence" value="ECO:0007669"/>
    <property type="project" value="UniProtKB-SubCell"/>
</dbReference>
<dbReference type="GO" id="GO:0019028">
    <property type="term" value="C:viral capsid"/>
    <property type="evidence" value="ECO:0007669"/>
    <property type="project" value="UniProtKB-UniRule"/>
</dbReference>
<dbReference type="GO" id="GO:0003677">
    <property type="term" value="F:DNA binding"/>
    <property type="evidence" value="ECO:0007669"/>
    <property type="project" value="UniProtKB-UniRule"/>
</dbReference>
<dbReference type="GO" id="GO:0005198">
    <property type="term" value="F:structural molecule activity"/>
    <property type="evidence" value="ECO:0007669"/>
    <property type="project" value="UniProtKB-UniRule"/>
</dbReference>
<dbReference type="GO" id="GO:0075521">
    <property type="term" value="P:microtubule-dependent intracellular transport of viral material towards nucleus"/>
    <property type="evidence" value="ECO:0007669"/>
    <property type="project" value="UniProtKB-UniRule"/>
</dbReference>
<dbReference type="GO" id="GO:0046718">
    <property type="term" value="P:symbiont entry into host cell"/>
    <property type="evidence" value="ECO:0007669"/>
    <property type="project" value="UniProtKB-KW"/>
</dbReference>
<dbReference type="GO" id="GO:0075732">
    <property type="term" value="P:viral penetration into host nucleus"/>
    <property type="evidence" value="ECO:0007669"/>
    <property type="project" value="UniProtKB-KW"/>
</dbReference>
<dbReference type="HAMAP" id="MF_04003">
    <property type="entry name" value="PPV_L2"/>
    <property type="match status" value="1"/>
</dbReference>
<dbReference type="InterPro" id="IPR000784">
    <property type="entry name" value="Late_L2"/>
</dbReference>
<dbReference type="Pfam" id="PF00513">
    <property type="entry name" value="Late_protein_L2"/>
    <property type="match status" value="1"/>
</dbReference>
<organism>
    <name type="scientific">Human papillomavirus 15</name>
    <dbReference type="NCBI Taxonomy" id="10606"/>
    <lineage>
        <taxon>Viruses</taxon>
        <taxon>Monodnaviria</taxon>
        <taxon>Shotokuvirae</taxon>
        <taxon>Cossaviricota</taxon>
        <taxon>Papovaviricetes</taxon>
        <taxon>Zurhausenvirales</taxon>
        <taxon>Papillomaviridae</taxon>
        <taxon>Firstpapillomavirinae</taxon>
        <taxon>Betapapillomavirus</taxon>
        <taxon>Betapapillomavirus 2</taxon>
    </lineage>
</organism>
<reference key="1">
    <citation type="journal article" date="1994" name="Curr. Top. Microbiol. Immunol.">
        <title>Primer-directed sequencing of human papillomavirus types.</title>
        <authorList>
            <person name="Delius H."/>
            <person name="Hofmann B."/>
        </authorList>
    </citation>
    <scope>NUCLEOTIDE SEQUENCE [GENOMIC DNA]</scope>
</reference>
<gene>
    <name evidence="1" type="primary">L2</name>
</gene>
<protein>
    <recommendedName>
        <fullName evidence="1">Minor capsid protein L2</fullName>
    </recommendedName>
</protein>
<accession>P36750</accession>